<organism>
    <name type="scientific">Caenorhabditis briggsae</name>
    <dbReference type="NCBI Taxonomy" id="6238"/>
    <lineage>
        <taxon>Eukaryota</taxon>
        <taxon>Metazoa</taxon>
        <taxon>Ecdysozoa</taxon>
        <taxon>Nematoda</taxon>
        <taxon>Chromadorea</taxon>
        <taxon>Rhabditida</taxon>
        <taxon>Rhabditina</taxon>
        <taxon>Rhabditomorpha</taxon>
        <taxon>Rhabditoidea</taxon>
        <taxon>Rhabditidae</taxon>
        <taxon>Peloderinae</taxon>
        <taxon>Caenorhabditis</taxon>
    </lineage>
</organism>
<gene>
    <name evidence="6" type="primary">odr-10</name>
    <name type="ORF">CBG10912</name>
</gene>
<protein>
    <recommendedName>
        <fullName evidence="1">Serpentine receptor class r-10</fullName>
    </recommendedName>
    <alternativeName>
        <fullName evidence="1">Odorant response abnormal protein 10</fullName>
    </alternativeName>
    <alternativeName>
        <fullName evidence="1">Olfactory receptor 10</fullName>
    </alternativeName>
</protein>
<proteinExistence type="inferred from homology"/>
<keyword id="KW-1003">Cell membrane</keyword>
<keyword id="KW-0966">Cell projection</keyword>
<keyword id="KW-0145">Chemotaxis</keyword>
<keyword id="KW-0969">Cilium</keyword>
<keyword id="KW-0325">Glycoprotein</keyword>
<keyword id="KW-0472">Membrane</keyword>
<keyword id="KW-0552">Olfaction</keyword>
<keyword id="KW-0675">Receptor</keyword>
<keyword id="KW-1185">Reference proteome</keyword>
<keyword id="KW-0716">Sensory transduction</keyword>
<keyword id="KW-0812">Transmembrane</keyword>
<keyword id="KW-1133">Transmembrane helix</keyword>
<sequence length="342" mass="39671">MTGELWLTLVDTADIVGFSMTFCVNIVLLFLLKNRGKNLGTYKHLMAFFSVFSIFYAIIESILRPIMHIENATFFLISRKRFNYSTRLGKINSAFYCACFATSFVVSGVHFVYRFFASCKPHLLRSFNMPYLLLWPLGCSIPVMMWASVSYFLYPDTAFTEAAVTNVLNTHYHSIKKDNVSYIAYVYYQYDENGVRYVYLKNLLGCFVHYFVMSATFVVMFICGYLTWKTMRKHKTASDRTRQLQKQLFKALVLQTLIPTIFMYAPTGVMFIAPFFSINLNANANFIVFCSFLYPGLDPLILILIIRDFRQTVFKFFCLRKKNSVDESRSTTRANMSQVATH</sequence>
<reference evidence="6" key="1">
    <citation type="journal article" date="2009" name="Genetics">
        <title>High nucleotide divergence in developmental regulatory genes contrasts with the structural elements of olfactory pathways in caenorhabditis.</title>
        <authorList>
            <person name="Jovelin R."/>
            <person name="Dunham J.P."/>
            <person name="Sung F.S."/>
            <person name="Phillips P.C."/>
        </authorList>
    </citation>
    <scope>NUCLEOTIDE SEQUENCE [GENOMIC DNA]</scope>
    <source>
        <strain evidence="7">DH1300</strain>
        <strain evidence="5">HK104</strain>
        <strain evidence="4">HK105</strain>
        <strain evidence="6">VT847</strain>
    </source>
</reference>
<reference evidence="8" key="2">
    <citation type="journal article" date="2003" name="PLoS Biol.">
        <title>The genome sequence of Caenorhabditis briggsae: a platform for comparative genomics.</title>
        <authorList>
            <person name="Stein L.D."/>
            <person name="Bao Z."/>
            <person name="Blasiar D."/>
            <person name="Blumenthal T."/>
            <person name="Brent M.R."/>
            <person name="Chen N."/>
            <person name="Chinwalla A."/>
            <person name="Clarke L."/>
            <person name="Clee C."/>
            <person name="Coghlan A."/>
            <person name="Coulson A."/>
            <person name="D'Eustachio P."/>
            <person name="Fitch D.H.A."/>
            <person name="Fulton L.A."/>
            <person name="Fulton R.E."/>
            <person name="Griffiths-Jones S."/>
            <person name="Harris T.W."/>
            <person name="Hillier L.W."/>
            <person name="Kamath R."/>
            <person name="Kuwabara P.E."/>
            <person name="Mardis E.R."/>
            <person name="Marra M.A."/>
            <person name="Miner T.L."/>
            <person name="Minx P."/>
            <person name="Mullikin J.C."/>
            <person name="Plumb R.W."/>
            <person name="Rogers J."/>
            <person name="Schein J.E."/>
            <person name="Sohrmann M."/>
            <person name="Spieth J."/>
            <person name="Stajich J.E."/>
            <person name="Wei C."/>
            <person name="Willey D."/>
            <person name="Wilson R.K."/>
            <person name="Durbin R.M."/>
            <person name="Waterston R.H."/>
        </authorList>
    </citation>
    <scope>NUCLEOTIDE SEQUENCE [LARGE SCALE GENOMIC DNA]</scope>
    <source>
        <strain>AF16</strain>
    </source>
</reference>
<evidence type="ECO:0000250" key="1">
    <source>
        <dbReference type="UniProtKB" id="Q18807"/>
    </source>
</evidence>
<evidence type="ECO:0000255" key="2"/>
<evidence type="ECO:0000305" key="3"/>
<evidence type="ECO:0000312" key="4">
    <source>
        <dbReference type="EMBL" id="ACQ44051.1"/>
    </source>
</evidence>
<evidence type="ECO:0000312" key="5">
    <source>
        <dbReference type="EMBL" id="ACQ44052.1"/>
    </source>
</evidence>
<evidence type="ECO:0000312" key="6">
    <source>
        <dbReference type="EMBL" id="ACQ44053.1"/>
    </source>
</evidence>
<evidence type="ECO:0000312" key="7">
    <source>
        <dbReference type="EMBL" id="ACQ44054.1"/>
    </source>
</evidence>
<evidence type="ECO:0000312" key="8">
    <source>
        <dbReference type="EMBL" id="CAP30190.2"/>
    </source>
</evidence>
<feature type="chain" id="PRO_0000391383" description="Serpentine receptor class r-10">
    <location>
        <begin position="1"/>
        <end position="342"/>
    </location>
</feature>
<feature type="topological domain" description="Extracellular" evidence="2">
    <location>
        <begin position="1"/>
        <end position="11"/>
    </location>
</feature>
<feature type="transmembrane region" description="Helical; Name=1" evidence="2">
    <location>
        <begin position="12"/>
        <end position="32"/>
    </location>
</feature>
<feature type="topological domain" description="Cytoplasmic" evidence="2">
    <location>
        <begin position="33"/>
        <end position="38"/>
    </location>
</feature>
<feature type="transmembrane region" description="Helical; Name=2" evidence="2">
    <location>
        <begin position="39"/>
        <end position="59"/>
    </location>
</feature>
<feature type="topological domain" description="Extracellular" evidence="2">
    <location>
        <begin position="60"/>
        <end position="92"/>
    </location>
</feature>
<feature type="transmembrane region" description="Helical; Name=3" evidence="2">
    <location>
        <begin position="93"/>
        <end position="113"/>
    </location>
</feature>
<feature type="topological domain" description="Cytoplasmic" evidence="2">
    <location>
        <begin position="114"/>
        <end position="131"/>
    </location>
</feature>
<feature type="transmembrane region" description="Helical; Name=4" evidence="2">
    <location>
        <begin position="132"/>
        <end position="152"/>
    </location>
</feature>
<feature type="topological domain" description="Extracellular" evidence="2">
    <location>
        <begin position="153"/>
        <end position="202"/>
    </location>
</feature>
<feature type="transmembrane region" description="Helical; Name=5" evidence="2">
    <location>
        <begin position="203"/>
        <end position="223"/>
    </location>
</feature>
<feature type="topological domain" description="Cytoplasmic" evidence="2">
    <location>
        <begin position="224"/>
        <end position="257"/>
    </location>
</feature>
<feature type="transmembrane region" description="Helical; Name=6" evidence="2">
    <location>
        <begin position="258"/>
        <end position="278"/>
    </location>
</feature>
<feature type="topological domain" description="Extracellular" evidence="2">
    <location>
        <begin position="279"/>
        <end position="285"/>
    </location>
</feature>
<feature type="transmembrane region" description="Helical; Name=7" evidence="2">
    <location>
        <begin position="286"/>
        <end position="306"/>
    </location>
</feature>
<feature type="topological domain" description="Cytoplasmic" evidence="2">
    <location>
        <begin position="307"/>
        <end position="342"/>
    </location>
</feature>
<feature type="glycosylation site" description="N-linked (GlcNAc...) asparagine" evidence="2">
    <location>
        <position position="71"/>
    </location>
</feature>
<feature type="glycosylation site" description="N-linked (GlcNAc...) asparagine" evidence="2">
    <location>
        <position position="83"/>
    </location>
</feature>
<feature type="glycosylation site" description="N-linked (GlcNAc...) asparagine" evidence="2">
    <location>
        <position position="179"/>
    </location>
</feature>
<feature type="sequence conflict" description="In Ref. 1; ACQ44051/ACQ44052." evidence="3" ref="1">
    <original>L</original>
    <variation>S</variation>
    <location>
        <position position="226"/>
    </location>
</feature>
<name>ODR10_CAEBR</name>
<comment type="function">
    <text evidence="1">An odorant receptor which affects chemotaxis to the volatile odorant diacetyl. Specifies AWA neuronal cell fate via the odr-7 pathway (By similarity).</text>
</comment>
<comment type="subunit">
    <text>Interacts with odr-4.</text>
</comment>
<comment type="subcellular location">
    <subcellularLocation>
        <location evidence="1 2">Cell projection</location>
        <location evidence="1 2">Cilium membrane</location>
        <topology evidence="1 2">Multi-pass membrane protein</topology>
    </subcellularLocation>
</comment>
<comment type="similarity">
    <text evidence="2">Belongs to the nematode receptor-like protein str family.</text>
</comment>
<accession>A8XC92</accession>
<accession>C3U4X6</accession>
<dbReference type="EMBL" id="FJ455661">
    <property type="protein sequence ID" value="ACQ44051.1"/>
    <property type="molecule type" value="Genomic_DNA"/>
</dbReference>
<dbReference type="EMBL" id="FJ455662">
    <property type="protein sequence ID" value="ACQ44052.1"/>
    <property type="molecule type" value="Genomic_DNA"/>
</dbReference>
<dbReference type="EMBL" id="FJ455663">
    <property type="protein sequence ID" value="ACQ44053.1"/>
    <property type="molecule type" value="Genomic_DNA"/>
</dbReference>
<dbReference type="EMBL" id="FJ455664">
    <property type="protein sequence ID" value="ACQ44054.1"/>
    <property type="molecule type" value="Genomic_DNA"/>
</dbReference>
<dbReference type="EMBL" id="HE601482">
    <property type="protein sequence ID" value="CAP30190.2"/>
    <property type="molecule type" value="Genomic_DNA"/>
</dbReference>
<dbReference type="RefSeq" id="XP_002644954.1">
    <property type="nucleotide sequence ID" value="XM_002644908.1"/>
</dbReference>
<dbReference type="SMR" id="A8XC92"/>
<dbReference type="FunCoup" id="A8XC92">
    <property type="interactions" value="7"/>
</dbReference>
<dbReference type="STRING" id="6238.A8XC92"/>
<dbReference type="GlyCosmos" id="A8XC92">
    <property type="glycosylation" value="3 sites, No reported glycans"/>
</dbReference>
<dbReference type="EnsemblMetazoa" id="CBG10912.1">
    <property type="protein sequence ID" value="CBG10912.1"/>
    <property type="gene ID" value="WBGene00032158"/>
</dbReference>
<dbReference type="KEGG" id="cbr:CBG_10912"/>
<dbReference type="CTD" id="8586951"/>
<dbReference type="WormBase" id="CBG10912">
    <property type="protein sequence ID" value="CBP28942"/>
    <property type="gene ID" value="WBGene00032158"/>
    <property type="gene designation" value="Cbr-odr-10"/>
</dbReference>
<dbReference type="eggNOG" id="ENOG502TFTY">
    <property type="taxonomic scope" value="Eukaryota"/>
</dbReference>
<dbReference type="HOGENOM" id="CLU_036335_2_1_1"/>
<dbReference type="InParanoid" id="A8XC92"/>
<dbReference type="OMA" id="IFMYAPT"/>
<dbReference type="Proteomes" id="UP000008549">
    <property type="component" value="Unassembled WGS sequence"/>
</dbReference>
<dbReference type="GO" id="GO:0060170">
    <property type="term" value="C:ciliary membrane"/>
    <property type="evidence" value="ECO:0007669"/>
    <property type="project" value="UniProtKB-SubCell"/>
</dbReference>
<dbReference type="GO" id="GO:0030425">
    <property type="term" value="C:dendrite"/>
    <property type="evidence" value="ECO:0007669"/>
    <property type="project" value="EnsemblMetazoa"/>
</dbReference>
<dbReference type="GO" id="GO:0043025">
    <property type="term" value="C:neuronal cell body"/>
    <property type="evidence" value="ECO:0007669"/>
    <property type="project" value="EnsemblMetazoa"/>
</dbReference>
<dbReference type="GO" id="GO:0097730">
    <property type="term" value="C:non-motile cilium"/>
    <property type="evidence" value="ECO:0007669"/>
    <property type="project" value="EnsemblMetazoa"/>
</dbReference>
<dbReference type="GO" id="GO:1990075">
    <property type="term" value="C:periciliary membrane compartment"/>
    <property type="evidence" value="ECO:0007669"/>
    <property type="project" value="EnsemblMetazoa"/>
</dbReference>
<dbReference type="GO" id="GO:0005886">
    <property type="term" value="C:plasma membrane"/>
    <property type="evidence" value="ECO:0000318"/>
    <property type="project" value="GO_Central"/>
</dbReference>
<dbReference type="GO" id="GO:0038022">
    <property type="term" value="F:G protein-coupled olfactory receptor activity"/>
    <property type="evidence" value="ECO:0000318"/>
    <property type="project" value="GO_Central"/>
</dbReference>
<dbReference type="GO" id="GO:0001965">
    <property type="term" value="F:G-protein alpha-subunit binding"/>
    <property type="evidence" value="ECO:0007669"/>
    <property type="project" value="EnsemblMetazoa"/>
</dbReference>
<dbReference type="GO" id="GO:0007186">
    <property type="term" value="P:G protein-coupled receptor signaling pathway"/>
    <property type="evidence" value="ECO:0000318"/>
    <property type="project" value="GO_Central"/>
</dbReference>
<dbReference type="GO" id="GO:0042048">
    <property type="term" value="P:olfactory behavior"/>
    <property type="evidence" value="ECO:0000318"/>
    <property type="project" value="GO_Central"/>
</dbReference>
<dbReference type="GO" id="GO:0050918">
    <property type="term" value="P:positive chemotaxis"/>
    <property type="evidence" value="ECO:0007669"/>
    <property type="project" value="EnsemblMetazoa"/>
</dbReference>
<dbReference type="FunFam" id="1.20.1070.10:FF:000128">
    <property type="entry name" value="Seven TM Receptor"/>
    <property type="match status" value="1"/>
</dbReference>
<dbReference type="Gene3D" id="1.20.1070.10">
    <property type="entry name" value="Rhodopsin 7-helix transmembrane proteins"/>
    <property type="match status" value="1"/>
</dbReference>
<dbReference type="InterPro" id="IPR019428">
    <property type="entry name" value="7TM_GPCR_serpentine_rcpt_Str"/>
</dbReference>
<dbReference type="PANTHER" id="PTHR22943">
    <property type="entry name" value="7-TRANSMEMBRANE DOMAIN RECEPTOR C.ELEGANS"/>
    <property type="match status" value="1"/>
</dbReference>
<dbReference type="PANTHER" id="PTHR22943:SF116">
    <property type="entry name" value="SERPENTINE RECEPTOR CLASS R-10"/>
    <property type="match status" value="1"/>
</dbReference>
<dbReference type="Pfam" id="PF10326">
    <property type="entry name" value="7TM_GPCR_Str"/>
    <property type="match status" value="1"/>
</dbReference>
<dbReference type="SUPFAM" id="SSF81321">
    <property type="entry name" value="Family A G protein-coupled receptor-like"/>
    <property type="match status" value="1"/>
</dbReference>